<sequence length="269" mass="32556">MGRSRSRSSSRSKHSKTSKHSKKRSRSRSRSRDRERKRRSKSRESKRNRRRESRSRSRSNTATSRRDRERAASPPERIDIFGRALSKRSAVDEKQKKEEEEKKVEMERQRRIRQQEIEERLIEEETARRVEELVAKRVEEELEKRKDEIEREVLRRVEEAKRIMEKQLLEELERQRHAELAAQKAREEEEKSKREELEKILVDNNRKIADAQAKLAEDQLRIVEEQRKIHEERMKLEQERQKQQKEEQKMILGKGKSRPKLSFSLKASE</sequence>
<gene>
    <name type="primary">arglu1b</name>
    <name type="ORF">zgc:55548</name>
</gene>
<keyword id="KW-0158">Chromosome</keyword>
<keyword id="KW-0507">mRNA processing</keyword>
<keyword id="KW-0508">mRNA splicing</keyword>
<keyword id="KW-0539">Nucleus</keyword>
<keyword id="KW-1185">Reference proteome</keyword>
<keyword id="KW-0694">RNA-binding</keyword>
<evidence type="ECO:0000250" key="1">
    <source>
        <dbReference type="UniProtKB" id="Q9NWB6"/>
    </source>
</evidence>
<evidence type="ECO:0000256" key="2">
    <source>
        <dbReference type="SAM" id="MobiDB-lite"/>
    </source>
</evidence>
<evidence type="ECO:0000269" key="3">
    <source>
    </source>
</evidence>
<evidence type="ECO:0000305" key="4"/>
<evidence type="ECO:0000312" key="5">
    <source>
        <dbReference type="Proteomes" id="UP000000437"/>
    </source>
</evidence>
<comment type="function">
    <text evidence="1">Dual function regulator of gene expression; regulator of transcription and modulator of alternative splicing. General coactivator of nuclear receptor-induced gene expression.</text>
</comment>
<comment type="subcellular location">
    <subcellularLocation>
        <location evidence="1">Nucleus</location>
    </subcellularLocation>
    <subcellularLocation>
        <location evidence="1">Nucleus speckle</location>
    </subcellularLocation>
    <subcellularLocation>
        <location evidence="1">Chromosome</location>
    </subcellularLocation>
</comment>
<comment type="developmental stage">
    <text evidence="3">Expressed throughout the brain in developing embryos.</text>
</comment>
<comment type="domain">
    <text evidence="1">The N-terminal region can bind RNA; preferentially binds 5'-CGG[AG]GG-3' motifs.</text>
</comment>
<comment type="domain">
    <text evidence="1">The non-classical LXXLL motifs are not required for nuclear receptor coactivator activity.</text>
</comment>
<comment type="domain">
    <text evidence="1">The C-terminal region is necessary and sufficient for regulation of transcription and nuclear receptor coactivator activity. The C-terminal region is not required for RNA binding.</text>
</comment>
<comment type="disruption phenotype">
    <text evidence="3">Morpholino-mediated knockdown produces embryos with expanded brain ventricles and a curved body axis (PubMed:30698747). Embryos have imparied movement without lethality up to day 9 post fertilization, after which they die due to an inability to feed (PubMed:30698747).</text>
</comment>
<comment type="similarity">
    <text evidence="4">Belongs to the ARGLU1 family.</text>
</comment>
<protein>
    <recommendedName>
        <fullName>Arginine and glutamate-rich protein 1-B</fullName>
    </recommendedName>
</protein>
<name>ARGLB_DANRE</name>
<accession>Q7ZVW9</accession>
<reference key="1">
    <citation type="submission" date="2003-01" db="EMBL/GenBank/DDBJ databases">
        <authorList>
            <consortium name="NIH - Zebrafish Gene Collection (ZGC) project"/>
        </authorList>
    </citation>
    <scope>NUCLEOTIDE SEQUENCE [LARGE SCALE MRNA]</scope>
    <source>
        <strain>AB</strain>
    </source>
</reference>
<reference key="2">
    <citation type="journal article" date="2019" name="Nucleic Acids Res.">
        <title>ARGLU1 is a transcriptional coactivator and splicing regulator important for stress hormone signaling and development.</title>
        <authorList>
            <person name="Magomedova L."/>
            <person name="Tiefenbach J."/>
            <person name="Zilberman E."/>
            <person name="Le Billan F."/>
            <person name="Voisin V."/>
            <person name="Saikali M."/>
            <person name="Boivin V."/>
            <person name="Robitaille M."/>
            <person name="Gueroussov S."/>
            <person name="Irimia M."/>
            <person name="Ray D."/>
            <person name="Patel R."/>
            <person name="Xu C."/>
            <person name="Jeyasuria P."/>
            <person name="Bader G.D."/>
            <person name="Hughes T.R."/>
            <person name="Morris Q.D."/>
            <person name="Scott M.S."/>
            <person name="Krause H."/>
            <person name="Angers S."/>
            <person name="Blencowe B.J."/>
            <person name="Cummins C.L."/>
        </authorList>
    </citation>
    <scope>DEVELOPMENTAL STAGE</scope>
    <scope>DISRUPTION PHENOTYPE</scope>
</reference>
<proteinExistence type="evidence at transcript level"/>
<organism evidence="5">
    <name type="scientific">Danio rerio</name>
    <name type="common">Zebrafish</name>
    <name type="synonym">Brachydanio rerio</name>
    <dbReference type="NCBI Taxonomy" id="7955"/>
    <lineage>
        <taxon>Eukaryota</taxon>
        <taxon>Metazoa</taxon>
        <taxon>Chordata</taxon>
        <taxon>Craniata</taxon>
        <taxon>Vertebrata</taxon>
        <taxon>Euteleostomi</taxon>
        <taxon>Actinopterygii</taxon>
        <taxon>Neopterygii</taxon>
        <taxon>Teleostei</taxon>
        <taxon>Ostariophysi</taxon>
        <taxon>Cypriniformes</taxon>
        <taxon>Danionidae</taxon>
        <taxon>Danioninae</taxon>
        <taxon>Danio</taxon>
    </lineage>
</organism>
<dbReference type="EMBL" id="BC045379">
    <property type="protein sequence ID" value="AAH45379.1"/>
    <property type="molecule type" value="mRNA"/>
</dbReference>
<dbReference type="RefSeq" id="NP_956456.1">
    <property type="nucleotide sequence ID" value="NM_200162.1"/>
</dbReference>
<dbReference type="SMR" id="Q7ZVW9"/>
<dbReference type="FunCoup" id="Q7ZVW9">
    <property type="interactions" value="4"/>
</dbReference>
<dbReference type="STRING" id="7955.ENSDARP00000014072"/>
<dbReference type="PaxDb" id="7955-ENSDARP00000014072"/>
<dbReference type="Ensembl" id="ENSDART00000013264">
    <property type="protein sequence ID" value="ENSDARP00000014072"/>
    <property type="gene ID" value="ENSDARG00000018319"/>
</dbReference>
<dbReference type="GeneID" id="393131"/>
<dbReference type="KEGG" id="dre:393131"/>
<dbReference type="AGR" id="ZFIN:ZDB-GENE-040426-736"/>
<dbReference type="CTD" id="393131"/>
<dbReference type="ZFIN" id="ZDB-GENE-040426-736">
    <property type="gene designation" value="arglu1b"/>
</dbReference>
<dbReference type="eggNOG" id="ENOG502QPR5">
    <property type="taxonomic scope" value="Eukaryota"/>
</dbReference>
<dbReference type="HOGENOM" id="CLU_076749_0_0_1"/>
<dbReference type="InParanoid" id="Q7ZVW9"/>
<dbReference type="OMA" id="VNSHGRH"/>
<dbReference type="OrthoDB" id="5862042at2759"/>
<dbReference type="PhylomeDB" id="Q7ZVW9"/>
<dbReference type="TreeFam" id="TF324123"/>
<dbReference type="PRO" id="PR:Q7ZVW9"/>
<dbReference type="Proteomes" id="UP000000437">
    <property type="component" value="Chromosome 1"/>
</dbReference>
<dbReference type="Bgee" id="ENSDARG00000018319">
    <property type="expression patterns" value="Expressed in pharyngeal gill and 27 other cell types or tissues"/>
</dbReference>
<dbReference type="GO" id="GO:0005694">
    <property type="term" value="C:chromosome"/>
    <property type="evidence" value="ECO:0007669"/>
    <property type="project" value="UniProtKB-SubCell"/>
</dbReference>
<dbReference type="GO" id="GO:0005739">
    <property type="term" value="C:mitochondrion"/>
    <property type="evidence" value="ECO:0000318"/>
    <property type="project" value="GO_Central"/>
</dbReference>
<dbReference type="GO" id="GO:0016607">
    <property type="term" value="C:nuclear speck"/>
    <property type="evidence" value="ECO:0000250"/>
    <property type="project" value="UniProtKB"/>
</dbReference>
<dbReference type="GO" id="GO:0005654">
    <property type="term" value="C:nucleoplasm"/>
    <property type="evidence" value="ECO:0000318"/>
    <property type="project" value="GO_Central"/>
</dbReference>
<dbReference type="GO" id="GO:0036002">
    <property type="term" value="F:pre-mRNA binding"/>
    <property type="evidence" value="ECO:0000250"/>
    <property type="project" value="UniProtKB"/>
</dbReference>
<dbReference type="GO" id="GO:0003713">
    <property type="term" value="F:transcription coactivator activity"/>
    <property type="evidence" value="ECO:0000250"/>
    <property type="project" value="UniProtKB"/>
</dbReference>
<dbReference type="GO" id="GO:0006397">
    <property type="term" value="P:mRNA processing"/>
    <property type="evidence" value="ECO:0007669"/>
    <property type="project" value="UniProtKB-KW"/>
</dbReference>
<dbReference type="GO" id="GO:0000381">
    <property type="term" value="P:regulation of alternative mRNA splicing, via spliceosome"/>
    <property type="evidence" value="ECO:0000250"/>
    <property type="project" value="UniProtKB"/>
</dbReference>
<dbReference type="GO" id="GO:0008380">
    <property type="term" value="P:RNA splicing"/>
    <property type="evidence" value="ECO:0007669"/>
    <property type="project" value="UniProtKB-KW"/>
</dbReference>
<dbReference type="InterPro" id="IPR033371">
    <property type="entry name" value="ARGLU1"/>
</dbReference>
<dbReference type="PANTHER" id="PTHR31711">
    <property type="entry name" value="ARGININE AND GLUTAMATE-RICH PROTEIN 1"/>
    <property type="match status" value="1"/>
</dbReference>
<dbReference type="PANTHER" id="PTHR31711:SF1">
    <property type="entry name" value="ARGININE AND GLUTAMATE-RICH PROTEIN 1"/>
    <property type="match status" value="1"/>
</dbReference>
<dbReference type="Pfam" id="PF15346">
    <property type="entry name" value="ARGLU"/>
    <property type="match status" value="1"/>
</dbReference>
<feature type="chain" id="PRO_0000288442" description="Arginine and glutamate-rich protein 1-B">
    <location>
        <begin position="1"/>
        <end position="269"/>
    </location>
</feature>
<feature type="region of interest" description="Disordered" evidence="2">
    <location>
        <begin position="1"/>
        <end position="109"/>
    </location>
</feature>
<feature type="region of interest" description="Necessary and sufficient for RNA binding" evidence="1">
    <location>
        <begin position="1"/>
        <end position="70"/>
    </location>
</feature>
<feature type="region of interest" description="Necessary and sufficient for transcriptional regulation" evidence="1">
    <location>
        <begin position="71"/>
        <end position="269"/>
    </location>
</feature>
<feature type="region of interest" description="Disordered" evidence="2">
    <location>
        <begin position="233"/>
        <end position="269"/>
    </location>
</feature>
<feature type="compositionally biased region" description="Basic residues" evidence="2">
    <location>
        <begin position="1"/>
        <end position="57"/>
    </location>
</feature>
<feature type="compositionally biased region" description="Basic and acidic residues" evidence="2">
    <location>
        <begin position="64"/>
        <end position="80"/>
    </location>
</feature>
<feature type="compositionally biased region" description="Basic and acidic residues" evidence="2">
    <location>
        <begin position="89"/>
        <end position="109"/>
    </location>
</feature>
<feature type="compositionally biased region" description="Basic and acidic residues" evidence="2">
    <location>
        <begin position="233"/>
        <end position="249"/>
    </location>
</feature>